<accession>O02073</accession>
<organism>
    <name type="scientific">Caenorhabditis elegans</name>
    <dbReference type="NCBI Taxonomy" id="6239"/>
    <lineage>
        <taxon>Eukaryota</taxon>
        <taxon>Metazoa</taxon>
        <taxon>Ecdysozoa</taxon>
        <taxon>Nematoda</taxon>
        <taxon>Chromadorea</taxon>
        <taxon>Rhabditida</taxon>
        <taxon>Rhabditina</taxon>
        <taxon>Rhabditomorpha</taxon>
        <taxon>Rhabditoidea</taxon>
        <taxon>Rhabditidae</taxon>
        <taxon>Peloderinae</taxon>
        <taxon>Caenorhabditis</taxon>
    </lineage>
</organism>
<gene>
    <name evidence="6" type="primary">sea-1</name>
    <name evidence="6" type="synonym">tbx-18</name>
    <name evidence="6" type="ORF">F19B10.9</name>
</gene>
<sequence>MDTIININNNNQKYPQSAEEYHKVLCNYFITLQSAMQSTSRPSSSSPPSLPAVSSELLSSSFPTNAPESSSRDLAPKQNQFTINVVLFDEKKKKNPEENLPANGDQLATLRSLMMQINPSSPPSIPATSPQLPLAESENVPESSSTLKDHKFSLNTMLFNVKKNDAVKISLANQEQWAKFHEIGTEMMVFNSGRRLFPLLAYKVSGLDPHKLYCAGVHMIPDSAYKQEYDHDLQQWVNCLNQKKTIFKPTSEILGRIENGFKLMSLGIDMSDVKIFNIAIRKKTPLQIEKSRKPNLDKTIEVLIQYKYLPVIKIYELSNSGMEKKEIAQATFPETSFVTVSIYRNQKIKEMKTLGNKYCRTDRKQIVMEQRGELEQ</sequence>
<comment type="function">
    <text evidence="3 4 5">Transcriptional regulator involved in developmental processes (PubMed:16139225, PubMed:23666922). Directly binds to the promoter region of the sex-determining factor xol-1 to activate its transcription (PubMed:16139225, PubMed:23666922). Its activation of xol-1 transcription controls sex determination and X chromosome dosage compensation to promote male development (PubMed:23666922). Has a role in the fox-1-sex-1-mediated determination of sexual fate (PubMed:21471153).</text>
</comment>
<comment type="subcellular location">
    <subcellularLocation>
        <location evidence="1 3">Nucleus</location>
    </subcellularLocation>
</comment>
<protein>
    <recommendedName>
        <fullName>T-box transcription factor 18</fullName>
    </recommendedName>
    <alternativeName>
        <fullName>Signal element on autosome protein 1</fullName>
    </alternativeName>
</protein>
<feature type="chain" id="PRO_0000184475" description="T-box transcription factor 18">
    <location>
        <begin position="1"/>
        <end position="376"/>
    </location>
</feature>
<feature type="DNA-binding region" description="T-box" evidence="1">
    <location>
        <begin position="171"/>
        <end position="364"/>
    </location>
</feature>
<feature type="region of interest" description="Disordered" evidence="2">
    <location>
        <begin position="38"/>
        <end position="76"/>
    </location>
</feature>
<feature type="compositionally biased region" description="Low complexity" evidence="2">
    <location>
        <begin position="38"/>
        <end position="63"/>
    </location>
</feature>
<feature type="mutagenesis site" description="In y356; 92% of hermaphrodites are viable. Increases the hermaphrodite viability of the sex-1 y424 mutant from 20% to 51%. Double knockout with the sea-2 y407 mutant increases the hermaphrodite viability of the sex-1 y424 mutant from 20% to 77%. Double knockout with sea-2 y407 increases the hermaphrodite viability of the double fox-1(y303) and sex-1(y263) mutant from 0% to 70%. All males are viable in a sea-2(y426) mutant background. Only 17% of hermaphrodites are viable in a knockout with sea-2(y426), fox-1(y303) and sex-1(y424). The viability of hermaphrodites is reduced to 11% in a triple xol-1(y9), sex-1(y263) and sdc-2 RNAi mutant background. The viability of hermaphrodites is reduced to 51% in a quadruple sea-2(y407), xol-1(y9), sex-1(y263) and sdc-2 RNAi mutant background." evidence="5">
    <location>
        <begin position="33"/>
        <end position="376"/>
    </location>
</feature>
<reference key="1">
    <citation type="journal article" date="1998" name="Science">
        <title>Genome sequence of the nematode C. elegans: a platform for investigating biology.</title>
        <authorList>
            <consortium name="The C. elegans sequencing consortium"/>
        </authorList>
    </citation>
    <scope>NUCLEOTIDE SEQUENCE [LARGE SCALE GENOMIC DNA]</scope>
    <source>
        <strain>Bristol N2</strain>
    </source>
</reference>
<reference key="2">
    <citation type="journal article" date="2005" name="Dev. Cell">
        <title>The T-box transcription factor SEA-1 is an autosomal element of the X:A signal that determines C. elegans sex.</title>
        <authorList>
            <person name="Powell J.R."/>
            <person name="Jow M.M."/>
            <person name="Meyer B.J."/>
        </authorList>
    </citation>
    <scope>FUNCTION</scope>
    <scope>SUBCELLULAR LOCATION</scope>
</reference>
<reference key="3">
    <citation type="journal article" date="2011" name="Development">
        <title>The zinc-finger protein SEA-2 regulates larval developmental timing and adult lifespan in C. elegans.</title>
        <authorList>
            <person name="Huang X."/>
            <person name="Zhang H."/>
            <person name="Zhang H."/>
        </authorList>
    </citation>
    <scope>FUNCTION</scope>
</reference>
<reference key="4">
    <citation type="journal article" date="2013" name="Genes Dev.">
        <title>Molecular antagonism between X-chromosome and autosome signals determines nematode sex.</title>
        <authorList>
            <person name="Farboud B."/>
            <person name="Nix P."/>
            <person name="Jow M.M."/>
            <person name="Gladden J.M."/>
            <person name="Meyer B.J."/>
        </authorList>
    </citation>
    <scope>FUNCTION</scope>
    <scope>MUTAGENESIS OF 33-GLN--GLN-376</scope>
</reference>
<name>TBX18_CAEEL</name>
<dbReference type="EMBL" id="BX284602">
    <property type="protein sequence ID" value="CCD69699.1"/>
    <property type="molecule type" value="Genomic_DNA"/>
</dbReference>
<dbReference type="PIR" id="T15166">
    <property type="entry name" value="T15166"/>
</dbReference>
<dbReference type="RefSeq" id="NP_494611.1">
    <property type="nucleotide sequence ID" value="NM_062210.6"/>
</dbReference>
<dbReference type="SMR" id="O02073"/>
<dbReference type="BioGRID" id="39067">
    <property type="interactions" value="1"/>
</dbReference>
<dbReference type="FunCoup" id="O02073">
    <property type="interactions" value="173"/>
</dbReference>
<dbReference type="STRING" id="6239.F19B10.9.1"/>
<dbReference type="PaxDb" id="6239-F19B10.9"/>
<dbReference type="EnsemblMetazoa" id="F19B10.9.1">
    <property type="protein sequence ID" value="F19B10.9.1"/>
    <property type="gene ID" value="WBGene00004750"/>
</dbReference>
<dbReference type="GeneID" id="173710"/>
<dbReference type="KEGG" id="cel:CELE_F19B10.9"/>
<dbReference type="UCSC" id="F19B10.9">
    <property type="organism name" value="c. elegans"/>
</dbReference>
<dbReference type="AGR" id="WB:WBGene00004750"/>
<dbReference type="CTD" id="173710"/>
<dbReference type="WormBase" id="F19B10.9">
    <property type="protein sequence ID" value="CE09476"/>
    <property type="gene ID" value="WBGene00004750"/>
    <property type="gene designation" value="sea-1"/>
</dbReference>
<dbReference type="eggNOG" id="KOG3585">
    <property type="taxonomic scope" value="Eukaryota"/>
</dbReference>
<dbReference type="GeneTree" id="ENSGT00940000170863"/>
<dbReference type="HOGENOM" id="CLU_736161_0_0_1"/>
<dbReference type="InParanoid" id="O02073"/>
<dbReference type="OMA" id="WAKFHEI"/>
<dbReference type="OrthoDB" id="7442607at2759"/>
<dbReference type="PhylomeDB" id="O02073"/>
<dbReference type="PRO" id="PR:O02073"/>
<dbReference type="Proteomes" id="UP000001940">
    <property type="component" value="Chromosome II"/>
</dbReference>
<dbReference type="Bgee" id="WBGene00004750">
    <property type="expression patterns" value="Expressed in embryo and 4 other cell types or tissues"/>
</dbReference>
<dbReference type="GO" id="GO:0000785">
    <property type="term" value="C:chromatin"/>
    <property type="evidence" value="ECO:0000318"/>
    <property type="project" value="GO_Central"/>
</dbReference>
<dbReference type="GO" id="GO:0005634">
    <property type="term" value="C:nucleus"/>
    <property type="evidence" value="ECO:0000314"/>
    <property type="project" value="WormBase"/>
</dbReference>
<dbReference type="GO" id="GO:0000981">
    <property type="term" value="F:DNA-binding transcription factor activity, RNA polymerase II-specific"/>
    <property type="evidence" value="ECO:0000318"/>
    <property type="project" value="GO_Central"/>
</dbReference>
<dbReference type="GO" id="GO:0000978">
    <property type="term" value="F:RNA polymerase II cis-regulatory region sequence-specific DNA binding"/>
    <property type="evidence" value="ECO:0000318"/>
    <property type="project" value="GO_Central"/>
</dbReference>
<dbReference type="GO" id="GO:0000977">
    <property type="term" value="F:RNA polymerase II transcription regulatory region sequence-specific DNA binding"/>
    <property type="evidence" value="ECO:0000314"/>
    <property type="project" value="WormBase"/>
</dbReference>
<dbReference type="GO" id="GO:0001708">
    <property type="term" value="P:cell fate specification"/>
    <property type="evidence" value="ECO:0000318"/>
    <property type="project" value="GO_Central"/>
</dbReference>
<dbReference type="GO" id="GO:0042464">
    <property type="term" value="P:dosage compensation by hypoactivation of X chromosome"/>
    <property type="evidence" value="ECO:0000316"/>
    <property type="project" value="WormBase"/>
</dbReference>
<dbReference type="GO" id="GO:0045944">
    <property type="term" value="P:positive regulation of transcription by RNA polymerase II"/>
    <property type="evidence" value="ECO:0000315"/>
    <property type="project" value="WormBase"/>
</dbReference>
<dbReference type="GO" id="GO:0006357">
    <property type="term" value="P:regulation of transcription by RNA polymerase II"/>
    <property type="evidence" value="ECO:0000318"/>
    <property type="project" value="GO_Central"/>
</dbReference>
<dbReference type="GO" id="GO:0007530">
    <property type="term" value="P:sex determination"/>
    <property type="evidence" value="ECO:0000316"/>
    <property type="project" value="WormBase"/>
</dbReference>
<dbReference type="CDD" id="cd00182">
    <property type="entry name" value="T-box"/>
    <property type="match status" value="1"/>
</dbReference>
<dbReference type="Gene3D" id="2.60.40.820">
    <property type="entry name" value="Transcription factor, T-box"/>
    <property type="match status" value="1"/>
</dbReference>
<dbReference type="InterPro" id="IPR008967">
    <property type="entry name" value="p53-like_TF_DNA-bd_sf"/>
</dbReference>
<dbReference type="InterPro" id="IPR046360">
    <property type="entry name" value="T-box_DNA-bd"/>
</dbReference>
<dbReference type="InterPro" id="IPR036960">
    <property type="entry name" value="T-box_sf"/>
</dbReference>
<dbReference type="InterPro" id="IPR001699">
    <property type="entry name" value="TF_T-box"/>
</dbReference>
<dbReference type="InterPro" id="IPR018186">
    <property type="entry name" value="TF_T-box_CS"/>
</dbReference>
<dbReference type="PANTHER" id="PTHR11267:SF204">
    <property type="entry name" value="SPADETAIL"/>
    <property type="match status" value="1"/>
</dbReference>
<dbReference type="PANTHER" id="PTHR11267">
    <property type="entry name" value="T-BOX PROTEIN-RELATED"/>
    <property type="match status" value="1"/>
</dbReference>
<dbReference type="Pfam" id="PF00907">
    <property type="entry name" value="T-box"/>
    <property type="match status" value="1"/>
</dbReference>
<dbReference type="PRINTS" id="PR00937">
    <property type="entry name" value="TBOX"/>
</dbReference>
<dbReference type="SMART" id="SM00425">
    <property type="entry name" value="TBOX"/>
    <property type="match status" value="1"/>
</dbReference>
<dbReference type="SUPFAM" id="SSF49417">
    <property type="entry name" value="p53-like transcription factors"/>
    <property type="match status" value="1"/>
</dbReference>
<dbReference type="PROSITE" id="PS01283">
    <property type="entry name" value="TBOX_1"/>
    <property type="match status" value="1"/>
</dbReference>
<dbReference type="PROSITE" id="PS50252">
    <property type="entry name" value="TBOX_3"/>
    <property type="match status" value="1"/>
</dbReference>
<evidence type="ECO:0000255" key="1">
    <source>
        <dbReference type="PROSITE-ProRule" id="PRU00201"/>
    </source>
</evidence>
<evidence type="ECO:0000256" key="2">
    <source>
        <dbReference type="SAM" id="MobiDB-lite"/>
    </source>
</evidence>
<evidence type="ECO:0000269" key="3">
    <source>
    </source>
</evidence>
<evidence type="ECO:0000269" key="4">
    <source>
    </source>
</evidence>
<evidence type="ECO:0000269" key="5">
    <source>
    </source>
</evidence>
<evidence type="ECO:0000312" key="6">
    <source>
        <dbReference type="WormBase" id="F19B10.9"/>
    </source>
</evidence>
<proteinExistence type="evidence at protein level"/>
<keyword id="KW-0010">Activator</keyword>
<keyword id="KW-0238">DNA-binding</keyword>
<keyword id="KW-0539">Nucleus</keyword>
<keyword id="KW-1185">Reference proteome</keyword>
<keyword id="KW-0804">Transcription</keyword>
<keyword id="KW-0805">Transcription regulation</keyword>